<feature type="chain" id="PRO_0000384667" description="Ribosome maturation factor RimP">
    <location>
        <begin position="1"/>
        <end position="156"/>
    </location>
</feature>
<organism>
    <name type="scientific">Exiguobacterium sp. (strain ATCC BAA-1283 / AT1b)</name>
    <dbReference type="NCBI Taxonomy" id="360911"/>
    <lineage>
        <taxon>Bacteria</taxon>
        <taxon>Bacillati</taxon>
        <taxon>Bacillota</taxon>
        <taxon>Bacilli</taxon>
        <taxon>Bacillales</taxon>
        <taxon>Bacillales Family XII. Incertae Sedis</taxon>
        <taxon>Exiguobacterium</taxon>
    </lineage>
</organism>
<dbReference type="EMBL" id="CP001615">
    <property type="protein sequence ID" value="ACQ71866.1"/>
    <property type="molecule type" value="Genomic_DNA"/>
</dbReference>
<dbReference type="RefSeq" id="WP_015881425.1">
    <property type="nucleotide sequence ID" value="NZ_MOEL01000013.1"/>
</dbReference>
<dbReference type="SMR" id="C4L660"/>
<dbReference type="STRING" id="360911.EAT1b_2952"/>
<dbReference type="GeneID" id="94372384"/>
<dbReference type="KEGG" id="eat:EAT1b_2952"/>
<dbReference type="eggNOG" id="COG0779">
    <property type="taxonomic scope" value="Bacteria"/>
</dbReference>
<dbReference type="HOGENOM" id="CLU_070525_2_0_9"/>
<dbReference type="OrthoDB" id="9805006at2"/>
<dbReference type="Proteomes" id="UP000000716">
    <property type="component" value="Chromosome"/>
</dbReference>
<dbReference type="GO" id="GO:0005829">
    <property type="term" value="C:cytosol"/>
    <property type="evidence" value="ECO:0007669"/>
    <property type="project" value="TreeGrafter"/>
</dbReference>
<dbReference type="GO" id="GO:0000028">
    <property type="term" value="P:ribosomal small subunit assembly"/>
    <property type="evidence" value="ECO:0007669"/>
    <property type="project" value="TreeGrafter"/>
</dbReference>
<dbReference type="GO" id="GO:0006412">
    <property type="term" value="P:translation"/>
    <property type="evidence" value="ECO:0007669"/>
    <property type="project" value="TreeGrafter"/>
</dbReference>
<dbReference type="CDD" id="cd01734">
    <property type="entry name" value="YlxS_C"/>
    <property type="match status" value="1"/>
</dbReference>
<dbReference type="FunFam" id="3.30.300.70:FF:000001">
    <property type="entry name" value="Ribosome maturation factor RimP"/>
    <property type="match status" value="1"/>
</dbReference>
<dbReference type="Gene3D" id="2.30.30.180">
    <property type="entry name" value="Ribosome maturation factor RimP, C-terminal domain"/>
    <property type="match status" value="1"/>
</dbReference>
<dbReference type="Gene3D" id="3.30.300.70">
    <property type="entry name" value="RimP-like superfamily, N-terminal"/>
    <property type="match status" value="1"/>
</dbReference>
<dbReference type="HAMAP" id="MF_01077">
    <property type="entry name" value="RimP"/>
    <property type="match status" value="1"/>
</dbReference>
<dbReference type="InterPro" id="IPR003728">
    <property type="entry name" value="Ribosome_maturation_RimP"/>
</dbReference>
<dbReference type="InterPro" id="IPR028998">
    <property type="entry name" value="RimP_C"/>
</dbReference>
<dbReference type="InterPro" id="IPR036847">
    <property type="entry name" value="RimP_C_sf"/>
</dbReference>
<dbReference type="InterPro" id="IPR028989">
    <property type="entry name" value="RimP_N"/>
</dbReference>
<dbReference type="InterPro" id="IPR035956">
    <property type="entry name" value="RimP_N_sf"/>
</dbReference>
<dbReference type="NCBIfam" id="NF000928">
    <property type="entry name" value="PRK00092.1-2"/>
    <property type="match status" value="1"/>
</dbReference>
<dbReference type="PANTHER" id="PTHR33867">
    <property type="entry name" value="RIBOSOME MATURATION FACTOR RIMP"/>
    <property type="match status" value="1"/>
</dbReference>
<dbReference type="PANTHER" id="PTHR33867:SF1">
    <property type="entry name" value="RIBOSOME MATURATION FACTOR RIMP"/>
    <property type="match status" value="1"/>
</dbReference>
<dbReference type="Pfam" id="PF17384">
    <property type="entry name" value="DUF150_C"/>
    <property type="match status" value="1"/>
</dbReference>
<dbReference type="Pfam" id="PF02576">
    <property type="entry name" value="RimP_N"/>
    <property type="match status" value="1"/>
</dbReference>
<dbReference type="SUPFAM" id="SSF74942">
    <property type="entry name" value="YhbC-like, C-terminal domain"/>
    <property type="match status" value="1"/>
</dbReference>
<dbReference type="SUPFAM" id="SSF75420">
    <property type="entry name" value="YhbC-like, N-terminal domain"/>
    <property type="match status" value="1"/>
</dbReference>
<protein>
    <recommendedName>
        <fullName evidence="1">Ribosome maturation factor RimP</fullName>
    </recommendedName>
</protein>
<comment type="function">
    <text evidence="1">Required for maturation of 30S ribosomal subunits.</text>
</comment>
<comment type="subcellular location">
    <subcellularLocation>
        <location evidence="1">Cytoplasm</location>
    </subcellularLocation>
</comment>
<comment type="similarity">
    <text evidence="1">Belongs to the RimP family.</text>
</comment>
<keyword id="KW-0963">Cytoplasm</keyword>
<keyword id="KW-0690">Ribosome biogenesis</keyword>
<accession>C4L660</accession>
<evidence type="ECO:0000255" key="1">
    <source>
        <dbReference type="HAMAP-Rule" id="MF_01077"/>
    </source>
</evidence>
<proteinExistence type="inferred from homology"/>
<sequence>MSKITEVVESIALPIVERENMELVDVEFVKEGPDWFLRVYIDKPGGVDLDDCVNINEQLSEKLNETDPIEQAYYLDVSSPGAERPLKKPSDFERAVGKNVYMKTFAPIDGAKEFEGILTAYDGETVVIETRIKTRKKAVSLPVDKIAQARLAVTFS</sequence>
<name>RIMP_EXISA</name>
<gene>
    <name evidence="1" type="primary">rimP</name>
    <name type="ordered locus">EAT1b_2952</name>
</gene>
<reference key="1">
    <citation type="journal article" date="2011" name="J. Bacteriol.">
        <title>Complete genome sequence of the Thermophilic Bacterium Exiguobacterium sp. AT1b.</title>
        <authorList>
            <person name="Vishnivetskaya T.A."/>
            <person name="Lucas S."/>
            <person name="Copeland A."/>
            <person name="Lapidus A."/>
            <person name="Glavina del Rio T."/>
            <person name="Dalin E."/>
            <person name="Tice H."/>
            <person name="Bruce D.C."/>
            <person name="Goodwin L.A."/>
            <person name="Pitluck S."/>
            <person name="Saunders E."/>
            <person name="Brettin T."/>
            <person name="Detter C."/>
            <person name="Han C."/>
            <person name="Larimer F."/>
            <person name="Land M.L."/>
            <person name="Hauser L.J."/>
            <person name="Kyrpides N.C."/>
            <person name="Ovchinnikova G."/>
            <person name="Kathariou S."/>
            <person name="Ramaley R.F."/>
            <person name="Rodrigues D.F."/>
            <person name="Hendrix C."/>
            <person name="Richardson P."/>
            <person name="Tiedje J.M."/>
        </authorList>
    </citation>
    <scope>NUCLEOTIDE SEQUENCE [LARGE SCALE GENOMIC DNA]</scope>
    <source>
        <strain>ATCC BAA-1283 / AT1b</strain>
    </source>
</reference>